<name>RL21_AZOVD</name>
<dbReference type="EMBL" id="CP001157">
    <property type="protein sequence ID" value="ACO80214.1"/>
    <property type="molecule type" value="Genomic_DNA"/>
</dbReference>
<dbReference type="RefSeq" id="WP_012702587.1">
    <property type="nucleotide sequence ID" value="NC_012560.1"/>
</dbReference>
<dbReference type="SMR" id="C1DEA6"/>
<dbReference type="STRING" id="322710.Avin_40790"/>
<dbReference type="EnsemblBacteria" id="ACO80214">
    <property type="protein sequence ID" value="ACO80214"/>
    <property type="gene ID" value="Avin_40790"/>
</dbReference>
<dbReference type="GeneID" id="88187017"/>
<dbReference type="KEGG" id="avn:Avin_40790"/>
<dbReference type="eggNOG" id="COG0261">
    <property type="taxonomic scope" value="Bacteria"/>
</dbReference>
<dbReference type="HOGENOM" id="CLU_061463_3_2_6"/>
<dbReference type="OrthoDB" id="9813334at2"/>
<dbReference type="Proteomes" id="UP000002424">
    <property type="component" value="Chromosome"/>
</dbReference>
<dbReference type="GO" id="GO:0005737">
    <property type="term" value="C:cytoplasm"/>
    <property type="evidence" value="ECO:0007669"/>
    <property type="project" value="UniProtKB-ARBA"/>
</dbReference>
<dbReference type="GO" id="GO:1990904">
    <property type="term" value="C:ribonucleoprotein complex"/>
    <property type="evidence" value="ECO:0007669"/>
    <property type="project" value="UniProtKB-KW"/>
</dbReference>
<dbReference type="GO" id="GO:0005840">
    <property type="term" value="C:ribosome"/>
    <property type="evidence" value="ECO:0007669"/>
    <property type="project" value="UniProtKB-KW"/>
</dbReference>
<dbReference type="GO" id="GO:0019843">
    <property type="term" value="F:rRNA binding"/>
    <property type="evidence" value="ECO:0007669"/>
    <property type="project" value="UniProtKB-UniRule"/>
</dbReference>
<dbReference type="GO" id="GO:0003735">
    <property type="term" value="F:structural constituent of ribosome"/>
    <property type="evidence" value="ECO:0007669"/>
    <property type="project" value="InterPro"/>
</dbReference>
<dbReference type="GO" id="GO:0006412">
    <property type="term" value="P:translation"/>
    <property type="evidence" value="ECO:0007669"/>
    <property type="project" value="UniProtKB-UniRule"/>
</dbReference>
<dbReference type="HAMAP" id="MF_01363">
    <property type="entry name" value="Ribosomal_bL21"/>
    <property type="match status" value="1"/>
</dbReference>
<dbReference type="InterPro" id="IPR028909">
    <property type="entry name" value="bL21-like"/>
</dbReference>
<dbReference type="InterPro" id="IPR036164">
    <property type="entry name" value="bL21-like_sf"/>
</dbReference>
<dbReference type="InterPro" id="IPR001787">
    <property type="entry name" value="Ribosomal_bL21"/>
</dbReference>
<dbReference type="InterPro" id="IPR018258">
    <property type="entry name" value="Ribosomal_bL21_CS"/>
</dbReference>
<dbReference type="NCBIfam" id="TIGR00061">
    <property type="entry name" value="L21"/>
    <property type="match status" value="1"/>
</dbReference>
<dbReference type="PANTHER" id="PTHR21349">
    <property type="entry name" value="50S RIBOSOMAL PROTEIN L21"/>
    <property type="match status" value="1"/>
</dbReference>
<dbReference type="PANTHER" id="PTHR21349:SF0">
    <property type="entry name" value="LARGE RIBOSOMAL SUBUNIT PROTEIN BL21M"/>
    <property type="match status" value="1"/>
</dbReference>
<dbReference type="Pfam" id="PF00829">
    <property type="entry name" value="Ribosomal_L21p"/>
    <property type="match status" value="1"/>
</dbReference>
<dbReference type="SUPFAM" id="SSF141091">
    <property type="entry name" value="L21p-like"/>
    <property type="match status" value="1"/>
</dbReference>
<dbReference type="PROSITE" id="PS01169">
    <property type="entry name" value="RIBOSOMAL_L21"/>
    <property type="match status" value="1"/>
</dbReference>
<organism>
    <name type="scientific">Azotobacter vinelandii (strain DJ / ATCC BAA-1303)</name>
    <dbReference type="NCBI Taxonomy" id="322710"/>
    <lineage>
        <taxon>Bacteria</taxon>
        <taxon>Pseudomonadati</taxon>
        <taxon>Pseudomonadota</taxon>
        <taxon>Gammaproteobacteria</taxon>
        <taxon>Pseudomonadales</taxon>
        <taxon>Pseudomonadaceae</taxon>
        <taxon>Azotobacter</taxon>
    </lineage>
</organism>
<reference key="1">
    <citation type="journal article" date="2009" name="J. Bacteriol.">
        <title>Genome sequence of Azotobacter vinelandii, an obligate aerobe specialized to support diverse anaerobic metabolic processes.</title>
        <authorList>
            <person name="Setubal J.C."/>
            <person name="Dos Santos P."/>
            <person name="Goldman B.S."/>
            <person name="Ertesvaag H."/>
            <person name="Espin G."/>
            <person name="Rubio L.M."/>
            <person name="Valla S."/>
            <person name="Almeida N.F."/>
            <person name="Balasubramanian D."/>
            <person name="Cromes L."/>
            <person name="Curatti L."/>
            <person name="Du Z."/>
            <person name="Godsy E."/>
            <person name="Goodner B."/>
            <person name="Hellner-Burris K."/>
            <person name="Hernandez J.A."/>
            <person name="Houmiel K."/>
            <person name="Imperial J."/>
            <person name="Kennedy C."/>
            <person name="Larson T.J."/>
            <person name="Latreille P."/>
            <person name="Ligon L.S."/>
            <person name="Lu J."/>
            <person name="Maerk M."/>
            <person name="Miller N.M."/>
            <person name="Norton S."/>
            <person name="O'Carroll I.P."/>
            <person name="Paulsen I."/>
            <person name="Raulfs E.C."/>
            <person name="Roemer R."/>
            <person name="Rosser J."/>
            <person name="Segura D."/>
            <person name="Slater S."/>
            <person name="Stricklin S.L."/>
            <person name="Studholme D.J."/>
            <person name="Sun J."/>
            <person name="Viana C.J."/>
            <person name="Wallin E."/>
            <person name="Wang B."/>
            <person name="Wheeler C."/>
            <person name="Zhu H."/>
            <person name="Dean D.R."/>
            <person name="Dixon R."/>
            <person name="Wood D."/>
        </authorList>
    </citation>
    <scope>NUCLEOTIDE SEQUENCE [LARGE SCALE GENOMIC DNA]</scope>
    <source>
        <strain>DJ / ATCC BAA-1303</strain>
    </source>
</reference>
<comment type="function">
    <text evidence="1">This protein binds to 23S rRNA in the presence of protein L20.</text>
</comment>
<comment type="subunit">
    <text evidence="1">Part of the 50S ribosomal subunit. Contacts protein L20.</text>
</comment>
<comment type="similarity">
    <text evidence="1">Belongs to the bacterial ribosomal protein bL21 family.</text>
</comment>
<feature type="chain" id="PRO_1000214880" description="Large ribosomal subunit protein bL21">
    <location>
        <begin position="1"/>
        <end position="103"/>
    </location>
</feature>
<evidence type="ECO:0000255" key="1">
    <source>
        <dbReference type="HAMAP-Rule" id="MF_01363"/>
    </source>
</evidence>
<evidence type="ECO:0000305" key="2"/>
<keyword id="KW-0687">Ribonucleoprotein</keyword>
<keyword id="KW-0689">Ribosomal protein</keyword>
<keyword id="KW-0694">RNA-binding</keyword>
<keyword id="KW-0699">rRNA-binding</keyword>
<sequence length="103" mass="11426">MYAVIVTGGKQYKVAEGEFLKIEKLEVGTGESVTFDRVLLVGNGDDVKIGAPVVDGAKVTAEVVGQGRHDKVSIIKFRRRKHHMKHQGHRQWFTEVKITGIQA</sequence>
<protein>
    <recommendedName>
        <fullName evidence="1">Large ribosomal subunit protein bL21</fullName>
    </recommendedName>
    <alternativeName>
        <fullName evidence="2">50S ribosomal protein L21</fullName>
    </alternativeName>
</protein>
<proteinExistence type="inferred from homology"/>
<gene>
    <name evidence="1" type="primary">rplU</name>
    <name type="ordered locus">Avin_40790</name>
</gene>
<accession>C1DEA6</accession>